<feature type="chain" id="PRO_1000132020" description="UPF0270 protein YheU">
    <location>
        <begin position="1"/>
        <end position="72"/>
    </location>
</feature>
<sequence>MIIPWQGLAPDTLDNLIESFVLREGTDYGEHERSLEQKVADVKLQLQSGEAVLVWSELHETVNIMPKKQFRE</sequence>
<evidence type="ECO:0000255" key="1">
    <source>
        <dbReference type="HAMAP-Rule" id="MF_00690"/>
    </source>
</evidence>
<gene>
    <name evidence="1" type="primary">yheU</name>
    <name type="ordered locus">SeD_A3831</name>
</gene>
<comment type="similarity">
    <text evidence="1">Belongs to the UPF0270 family.</text>
</comment>
<reference key="1">
    <citation type="journal article" date="2011" name="J. Bacteriol.">
        <title>Comparative genomics of 28 Salmonella enterica isolates: evidence for CRISPR-mediated adaptive sublineage evolution.</title>
        <authorList>
            <person name="Fricke W.F."/>
            <person name="Mammel M.K."/>
            <person name="McDermott P.F."/>
            <person name="Tartera C."/>
            <person name="White D.G."/>
            <person name="Leclerc J.E."/>
            <person name="Ravel J."/>
            <person name="Cebula T.A."/>
        </authorList>
    </citation>
    <scope>NUCLEOTIDE SEQUENCE [LARGE SCALE GENOMIC DNA]</scope>
    <source>
        <strain>CT_02021853</strain>
    </source>
</reference>
<dbReference type="EMBL" id="CP001144">
    <property type="protein sequence ID" value="ACH75288.1"/>
    <property type="molecule type" value="Genomic_DNA"/>
</dbReference>
<dbReference type="RefSeq" id="WP_000586567.1">
    <property type="nucleotide sequence ID" value="NC_011205.1"/>
</dbReference>
<dbReference type="SMR" id="B5FJN6"/>
<dbReference type="KEGG" id="sed:SeD_A3831"/>
<dbReference type="HOGENOM" id="CLU_186759_1_0_6"/>
<dbReference type="Proteomes" id="UP000008322">
    <property type="component" value="Chromosome"/>
</dbReference>
<dbReference type="Gene3D" id="1.10.10.610">
    <property type="entry name" value="YehU-like"/>
    <property type="match status" value="1"/>
</dbReference>
<dbReference type="HAMAP" id="MF_00690">
    <property type="entry name" value="UPF0270"/>
    <property type="match status" value="1"/>
</dbReference>
<dbReference type="InterPro" id="IPR010648">
    <property type="entry name" value="UPF0270"/>
</dbReference>
<dbReference type="InterPro" id="IPR036685">
    <property type="entry name" value="YehU-like_sf"/>
</dbReference>
<dbReference type="NCBIfam" id="NF003438">
    <property type="entry name" value="PRK04966.1"/>
    <property type="match status" value="1"/>
</dbReference>
<dbReference type="Pfam" id="PF06794">
    <property type="entry name" value="UPF0270"/>
    <property type="match status" value="1"/>
</dbReference>
<dbReference type="PIRSF" id="PIRSF006169">
    <property type="entry name" value="UCP006169"/>
    <property type="match status" value="1"/>
</dbReference>
<dbReference type="SUPFAM" id="SSF118001">
    <property type="entry name" value="YehU-like"/>
    <property type="match status" value="1"/>
</dbReference>
<organism>
    <name type="scientific">Salmonella dublin (strain CT_02021853)</name>
    <dbReference type="NCBI Taxonomy" id="439851"/>
    <lineage>
        <taxon>Bacteria</taxon>
        <taxon>Pseudomonadati</taxon>
        <taxon>Pseudomonadota</taxon>
        <taxon>Gammaproteobacteria</taxon>
        <taxon>Enterobacterales</taxon>
        <taxon>Enterobacteriaceae</taxon>
        <taxon>Salmonella</taxon>
    </lineage>
</organism>
<accession>B5FJN6</accession>
<name>YHEU_SALDC</name>
<protein>
    <recommendedName>
        <fullName evidence="1">UPF0270 protein YheU</fullName>
    </recommendedName>
</protein>
<proteinExistence type="inferred from homology"/>